<organism>
    <name type="scientific">Thermotoga petrophila (strain ATCC BAA-488 / DSM 13995 / JCM 10881 / RKU-1)</name>
    <dbReference type="NCBI Taxonomy" id="390874"/>
    <lineage>
        <taxon>Bacteria</taxon>
        <taxon>Thermotogati</taxon>
        <taxon>Thermotogota</taxon>
        <taxon>Thermotogae</taxon>
        <taxon>Thermotogales</taxon>
        <taxon>Thermotogaceae</taxon>
        <taxon>Thermotoga</taxon>
    </lineage>
</organism>
<gene>
    <name evidence="1" type="primary">proA</name>
    <name type="ordered locus">Tpet_0619</name>
</gene>
<reference key="1">
    <citation type="submission" date="2007-05" db="EMBL/GenBank/DDBJ databases">
        <title>Complete sequence of Thermotoga petrophila RKU-1.</title>
        <authorList>
            <consortium name="US DOE Joint Genome Institute"/>
            <person name="Copeland A."/>
            <person name="Lucas S."/>
            <person name="Lapidus A."/>
            <person name="Barry K."/>
            <person name="Glavina del Rio T."/>
            <person name="Dalin E."/>
            <person name="Tice H."/>
            <person name="Pitluck S."/>
            <person name="Sims D."/>
            <person name="Brettin T."/>
            <person name="Bruce D."/>
            <person name="Detter J.C."/>
            <person name="Han C."/>
            <person name="Tapia R."/>
            <person name="Schmutz J."/>
            <person name="Larimer F."/>
            <person name="Land M."/>
            <person name="Hauser L."/>
            <person name="Kyrpides N."/>
            <person name="Mikhailova N."/>
            <person name="Nelson K."/>
            <person name="Gogarten J.P."/>
            <person name="Noll K."/>
            <person name="Richardson P."/>
        </authorList>
    </citation>
    <scope>NUCLEOTIDE SEQUENCE [LARGE SCALE GENOMIC DNA]</scope>
    <source>
        <strain>ATCC BAA-488 / DSM 13995 / JCM 10881 / RKU-1</strain>
    </source>
</reference>
<evidence type="ECO:0000255" key="1">
    <source>
        <dbReference type="HAMAP-Rule" id="MF_00412"/>
    </source>
</evidence>
<protein>
    <recommendedName>
        <fullName evidence="1">Gamma-glutamyl phosphate reductase</fullName>
        <shortName evidence="1">GPR</shortName>
        <ecNumber evidence="1">1.2.1.41</ecNumber>
    </recommendedName>
    <alternativeName>
        <fullName evidence="1">Glutamate-5-semialdehyde dehydrogenase</fullName>
    </alternativeName>
    <alternativeName>
        <fullName evidence="1">Glutamyl-gamma-semialdehyde dehydrogenase</fullName>
        <shortName evidence="1">GSA dehydrogenase</shortName>
    </alternativeName>
</protein>
<keyword id="KW-0028">Amino-acid biosynthesis</keyword>
<keyword id="KW-0963">Cytoplasm</keyword>
<keyword id="KW-0521">NADP</keyword>
<keyword id="KW-0560">Oxidoreductase</keyword>
<keyword id="KW-0641">Proline biosynthesis</keyword>
<name>PROA_THEP1</name>
<accession>A5IKB6</accession>
<comment type="function">
    <text evidence="1">Catalyzes the NADPH-dependent reduction of L-glutamate 5-phosphate into L-glutamate 5-semialdehyde and phosphate. The product spontaneously undergoes cyclization to form 1-pyrroline-5-carboxylate.</text>
</comment>
<comment type="catalytic activity">
    <reaction evidence="1">
        <text>L-glutamate 5-semialdehyde + phosphate + NADP(+) = L-glutamyl 5-phosphate + NADPH + H(+)</text>
        <dbReference type="Rhea" id="RHEA:19541"/>
        <dbReference type="ChEBI" id="CHEBI:15378"/>
        <dbReference type="ChEBI" id="CHEBI:43474"/>
        <dbReference type="ChEBI" id="CHEBI:57783"/>
        <dbReference type="ChEBI" id="CHEBI:58066"/>
        <dbReference type="ChEBI" id="CHEBI:58274"/>
        <dbReference type="ChEBI" id="CHEBI:58349"/>
        <dbReference type="EC" id="1.2.1.41"/>
    </reaction>
</comment>
<comment type="pathway">
    <text evidence="1">Amino-acid biosynthesis; L-proline biosynthesis; L-glutamate 5-semialdehyde from L-glutamate: step 2/2.</text>
</comment>
<comment type="subcellular location">
    <subcellularLocation>
        <location evidence="1">Cytoplasm</location>
    </subcellularLocation>
</comment>
<comment type="similarity">
    <text evidence="1">Belongs to the gamma-glutamyl phosphate reductase family.</text>
</comment>
<dbReference type="EC" id="1.2.1.41" evidence="1"/>
<dbReference type="EMBL" id="CP000702">
    <property type="protein sequence ID" value="ABQ46639.1"/>
    <property type="molecule type" value="Genomic_DNA"/>
</dbReference>
<dbReference type="RefSeq" id="WP_011943230.1">
    <property type="nucleotide sequence ID" value="NC_009486.1"/>
</dbReference>
<dbReference type="SMR" id="A5IKB6"/>
<dbReference type="STRING" id="390874.Tpet_0619"/>
<dbReference type="KEGG" id="tpt:Tpet_0619"/>
<dbReference type="eggNOG" id="COG0014">
    <property type="taxonomic scope" value="Bacteria"/>
</dbReference>
<dbReference type="HOGENOM" id="CLU_030231_0_0_0"/>
<dbReference type="UniPathway" id="UPA00098">
    <property type="reaction ID" value="UER00360"/>
</dbReference>
<dbReference type="Proteomes" id="UP000006558">
    <property type="component" value="Chromosome"/>
</dbReference>
<dbReference type="GO" id="GO:0005737">
    <property type="term" value="C:cytoplasm"/>
    <property type="evidence" value="ECO:0007669"/>
    <property type="project" value="UniProtKB-SubCell"/>
</dbReference>
<dbReference type="GO" id="GO:0004350">
    <property type="term" value="F:glutamate-5-semialdehyde dehydrogenase activity"/>
    <property type="evidence" value="ECO:0007669"/>
    <property type="project" value="UniProtKB-UniRule"/>
</dbReference>
<dbReference type="GO" id="GO:0050661">
    <property type="term" value="F:NADP binding"/>
    <property type="evidence" value="ECO:0007669"/>
    <property type="project" value="InterPro"/>
</dbReference>
<dbReference type="GO" id="GO:0055129">
    <property type="term" value="P:L-proline biosynthetic process"/>
    <property type="evidence" value="ECO:0007669"/>
    <property type="project" value="UniProtKB-UniRule"/>
</dbReference>
<dbReference type="CDD" id="cd07079">
    <property type="entry name" value="ALDH_F18-19_ProA-GPR"/>
    <property type="match status" value="1"/>
</dbReference>
<dbReference type="FunFam" id="3.40.309.10:FF:000006">
    <property type="entry name" value="Gamma-glutamyl phosphate reductase"/>
    <property type="match status" value="1"/>
</dbReference>
<dbReference type="Gene3D" id="3.40.605.10">
    <property type="entry name" value="Aldehyde Dehydrogenase, Chain A, domain 1"/>
    <property type="match status" value="1"/>
</dbReference>
<dbReference type="Gene3D" id="3.40.309.10">
    <property type="entry name" value="Aldehyde Dehydrogenase, Chain A, domain 2"/>
    <property type="match status" value="1"/>
</dbReference>
<dbReference type="HAMAP" id="MF_00412">
    <property type="entry name" value="ProA"/>
    <property type="match status" value="1"/>
</dbReference>
<dbReference type="InterPro" id="IPR016161">
    <property type="entry name" value="Ald_DH/histidinol_DH"/>
</dbReference>
<dbReference type="InterPro" id="IPR016163">
    <property type="entry name" value="Ald_DH_C"/>
</dbReference>
<dbReference type="InterPro" id="IPR016162">
    <property type="entry name" value="Ald_DH_N"/>
</dbReference>
<dbReference type="InterPro" id="IPR015590">
    <property type="entry name" value="Aldehyde_DH_dom"/>
</dbReference>
<dbReference type="InterPro" id="IPR020593">
    <property type="entry name" value="G-glutamylP_reductase_CS"/>
</dbReference>
<dbReference type="InterPro" id="IPR012134">
    <property type="entry name" value="Glu-5-SA_DH"/>
</dbReference>
<dbReference type="InterPro" id="IPR000965">
    <property type="entry name" value="GPR_dom"/>
</dbReference>
<dbReference type="NCBIfam" id="NF001221">
    <property type="entry name" value="PRK00197.1"/>
    <property type="match status" value="1"/>
</dbReference>
<dbReference type="NCBIfam" id="TIGR00407">
    <property type="entry name" value="proA"/>
    <property type="match status" value="1"/>
</dbReference>
<dbReference type="PANTHER" id="PTHR11063:SF8">
    <property type="entry name" value="DELTA-1-PYRROLINE-5-CARBOXYLATE SYNTHASE"/>
    <property type="match status" value="1"/>
</dbReference>
<dbReference type="PANTHER" id="PTHR11063">
    <property type="entry name" value="GLUTAMATE SEMIALDEHYDE DEHYDROGENASE"/>
    <property type="match status" value="1"/>
</dbReference>
<dbReference type="Pfam" id="PF00171">
    <property type="entry name" value="Aldedh"/>
    <property type="match status" value="2"/>
</dbReference>
<dbReference type="PIRSF" id="PIRSF000151">
    <property type="entry name" value="GPR"/>
    <property type="match status" value="1"/>
</dbReference>
<dbReference type="SUPFAM" id="SSF53720">
    <property type="entry name" value="ALDH-like"/>
    <property type="match status" value="1"/>
</dbReference>
<dbReference type="PROSITE" id="PS01223">
    <property type="entry name" value="PROA"/>
    <property type="match status" value="1"/>
</dbReference>
<feature type="chain" id="PRO_1000050003" description="Gamma-glutamyl phosphate reductase">
    <location>
        <begin position="1"/>
        <end position="415"/>
    </location>
</feature>
<proteinExistence type="inferred from homology"/>
<sequence>MDELLEKAKKVREAWDVLRNATTREKNKAIKKIAEKLDEKRKEILEANKIDVEKARERGVKESLVDRLALNDKRIDEMIKACETVIGLKDPVGEVIDSWVREDGLRIARVRVPIGPIGIIYESRPNVTVETTILALKSGNTILLRGGSDALNSNKAIVLAIKEALRETEVPESSVEFIENTDRSLVLEMIRLREYLSLVIPRGGYGLISFVRDNATVPVLETGVGNCHIFVDESADLKKAVPVIINAKTQRPGTCNAAEKLLVHEKIAKEFLPVIVEELRKHGVEVRGCEKTREIVPDVVPATEEDWPTEYLDLIIAIKVVRDVDEAIEHIKKYSTGHSESILTENYSNAKKFVSEIDAAAVYVNASTRFTDGGQFGFGAEIGISTQRFHARGPVGLRELTTYKFVVLGNYHVRE</sequence>